<protein>
    <recommendedName>
        <fullName>Tubulin gamma-2 chain</fullName>
    </recommendedName>
    <alternativeName>
        <fullName>Gamma-2-tubulin</fullName>
    </alternativeName>
</protein>
<comment type="function">
    <text evidence="3">Tubulin is the major constituent of microtubules, protein filaments consisting of alpha- and beta-tubulin heterodimers (PubMed:38305685). Gamma-tubulin is a key component of the gamma-tubulin ring complex (gTuRC) which mediates microtubule nucleation (PubMed:38305685). The gTuRC regulates the minus-end nucleation of alpha-beta tubulin heterodimers that grow into microtubule protafilaments, a critical step in centrosome duplication and spindle formation (PubMed:38305685).</text>
</comment>
<comment type="subunit">
    <text evidence="3">Component of the gamma-tubulin ring complex (gTuRC) consisting of TUBGCP2, TUBGCP3, TUBGCP4, TUBGCP5 and TUBGCP6 and gamma-tubulin TUBG1 or TUBG2 (PubMed:38305685). TUBGCP2, TUBGCP3, TUBGCP4, TUBGCP5 and TUBGCP6 assemble in a 5:5:2:1:1 stoichiometry; each is associated with a gamma-tubulin, thereby arranging 14 gamma-tubulins in a helical manner (PubMed:38305685). Gamma-tubulin at the first position is blocked by TUBGCP3 at the last position, allowing 13 protafilaments to grow into a microtubule (PubMed:38305685). Interacts with alpha-beta tubulin heterodimers; the interaction allows microtubules to nucleate from the gTuRC (PubMed:38305685).</text>
</comment>
<comment type="subcellular location">
    <subcellularLocation>
        <location evidence="4">Cytoplasm</location>
        <location evidence="4">Cytoskeleton</location>
        <location evidence="4">Microtubule organizing center</location>
        <location evidence="4">Centrosome</location>
    </subcellularLocation>
</comment>
<comment type="PTM">
    <text>Phosphorylation at Ser-131 by BRSK1 regulates centrosome duplication, possibly by mediating relocation of gamma-tubulin and its associated proteins from the cytoplasm to the centrosome.</text>
</comment>
<comment type="similarity">
    <text evidence="4">Belongs to the tubulin family.</text>
</comment>
<keyword id="KW-0963">Cytoplasm</keyword>
<keyword id="KW-0206">Cytoskeleton</keyword>
<keyword id="KW-0342">GTP-binding</keyword>
<keyword id="KW-0493">Microtubule</keyword>
<keyword id="KW-0547">Nucleotide-binding</keyword>
<keyword id="KW-0597">Phosphoprotein</keyword>
<keyword id="KW-1267">Proteomics identification</keyword>
<keyword id="KW-1185">Reference proteome</keyword>
<feature type="chain" id="PRO_0000048468" description="Tubulin gamma-2 chain">
    <location>
        <begin position="1"/>
        <end position="451"/>
    </location>
</feature>
<feature type="binding site" evidence="2">
    <location>
        <begin position="142"/>
        <end position="148"/>
    </location>
    <ligand>
        <name>GTP</name>
        <dbReference type="ChEBI" id="CHEBI:37565"/>
    </ligand>
</feature>
<feature type="modified residue" description="Phosphoserine; by BRSK1" evidence="1">
    <location>
        <position position="131"/>
    </location>
</feature>
<feature type="sequence variant" id="VAR_020418" description="In dbSNP:rs1046097.">
    <original>M</original>
    <variation>V</variation>
    <location>
        <position position="413"/>
    </location>
</feature>
<proteinExistence type="evidence at protein level"/>
<organism>
    <name type="scientific">Homo sapiens</name>
    <name type="common">Human</name>
    <dbReference type="NCBI Taxonomy" id="9606"/>
    <lineage>
        <taxon>Eukaryota</taxon>
        <taxon>Metazoa</taxon>
        <taxon>Chordata</taxon>
        <taxon>Craniata</taxon>
        <taxon>Vertebrata</taxon>
        <taxon>Euteleostomi</taxon>
        <taxon>Mammalia</taxon>
        <taxon>Eutheria</taxon>
        <taxon>Euarchontoglires</taxon>
        <taxon>Primates</taxon>
        <taxon>Haplorrhini</taxon>
        <taxon>Catarrhini</taxon>
        <taxon>Hominidae</taxon>
        <taxon>Homo</taxon>
    </lineage>
</organism>
<gene>
    <name type="primary">TUBG2</name>
</gene>
<name>TBG2_HUMAN</name>
<accession>Q9NRH3</accession>
<accession>A6NDI4</accession>
<accession>Q32NB2</accession>
<reference key="1">
    <citation type="journal article" date="2000" name="Genomics">
        <title>The gamma-tubulin gene family in humans.</title>
        <authorList>
            <person name="Wise D.O."/>
            <person name="Krahe R."/>
            <person name="Oakley B.R."/>
        </authorList>
    </citation>
    <scope>NUCLEOTIDE SEQUENCE [MRNA]</scope>
</reference>
<reference key="2">
    <citation type="journal article" date="2004" name="Nat. Genet.">
        <title>Complete sequencing and characterization of 21,243 full-length human cDNAs.</title>
        <authorList>
            <person name="Ota T."/>
            <person name="Suzuki Y."/>
            <person name="Nishikawa T."/>
            <person name="Otsuki T."/>
            <person name="Sugiyama T."/>
            <person name="Irie R."/>
            <person name="Wakamatsu A."/>
            <person name="Hayashi K."/>
            <person name="Sato H."/>
            <person name="Nagai K."/>
            <person name="Kimura K."/>
            <person name="Makita H."/>
            <person name="Sekine M."/>
            <person name="Obayashi M."/>
            <person name="Nishi T."/>
            <person name="Shibahara T."/>
            <person name="Tanaka T."/>
            <person name="Ishii S."/>
            <person name="Yamamoto J."/>
            <person name="Saito K."/>
            <person name="Kawai Y."/>
            <person name="Isono Y."/>
            <person name="Nakamura Y."/>
            <person name="Nagahari K."/>
            <person name="Murakami K."/>
            <person name="Yasuda T."/>
            <person name="Iwayanagi T."/>
            <person name="Wagatsuma M."/>
            <person name="Shiratori A."/>
            <person name="Sudo H."/>
            <person name="Hosoiri T."/>
            <person name="Kaku Y."/>
            <person name="Kodaira H."/>
            <person name="Kondo H."/>
            <person name="Sugawara M."/>
            <person name="Takahashi M."/>
            <person name="Kanda K."/>
            <person name="Yokoi T."/>
            <person name="Furuya T."/>
            <person name="Kikkawa E."/>
            <person name="Omura Y."/>
            <person name="Abe K."/>
            <person name="Kamihara K."/>
            <person name="Katsuta N."/>
            <person name="Sato K."/>
            <person name="Tanikawa M."/>
            <person name="Yamazaki M."/>
            <person name="Ninomiya K."/>
            <person name="Ishibashi T."/>
            <person name="Yamashita H."/>
            <person name="Murakawa K."/>
            <person name="Fujimori K."/>
            <person name="Tanai H."/>
            <person name="Kimata M."/>
            <person name="Watanabe M."/>
            <person name="Hiraoka S."/>
            <person name="Chiba Y."/>
            <person name="Ishida S."/>
            <person name="Ono Y."/>
            <person name="Takiguchi S."/>
            <person name="Watanabe S."/>
            <person name="Yosida M."/>
            <person name="Hotuta T."/>
            <person name="Kusano J."/>
            <person name="Kanehori K."/>
            <person name="Takahashi-Fujii A."/>
            <person name="Hara H."/>
            <person name="Tanase T.-O."/>
            <person name="Nomura Y."/>
            <person name="Togiya S."/>
            <person name="Komai F."/>
            <person name="Hara R."/>
            <person name="Takeuchi K."/>
            <person name="Arita M."/>
            <person name="Imose N."/>
            <person name="Musashino K."/>
            <person name="Yuuki H."/>
            <person name="Oshima A."/>
            <person name="Sasaki N."/>
            <person name="Aotsuka S."/>
            <person name="Yoshikawa Y."/>
            <person name="Matsunawa H."/>
            <person name="Ichihara T."/>
            <person name="Shiohata N."/>
            <person name="Sano S."/>
            <person name="Moriya S."/>
            <person name="Momiyama H."/>
            <person name="Satoh N."/>
            <person name="Takami S."/>
            <person name="Terashima Y."/>
            <person name="Suzuki O."/>
            <person name="Nakagawa S."/>
            <person name="Senoh A."/>
            <person name="Mizoguchi H."/>
            <person name="Goto Y."/>
            <person name="Shimizu F."/>
            <person name="Wakebe H."/>
            <person name="Hishigaki H."/>
            <person name="Watanabe T."/>
            <person name="Sugiyama A."/>
            <person name="Takemoto M."/>
            <person name="Kawakami B."/>
            <person name="Yamazaki M."/>
            <person name="Watanabe K."/>
            <person name="Kumagai A."/>
            <person name="Itakura S."/>
            <person name="Fukuzumi Y."/>
            <person name="Fujimori Y."/>
            <person name="Komiyama M."/>
            <person name="Tashiro H."/>
            <person name="Tanigami A."/>
            <person name="Fujiwara T."/>
            <person name="Ono T."/>
            <person name="Yamada K."/>
            <person name="Fujii Y."/>
            <person name="Ozaki K."/>
            <person name="Hirao M."/>
            <person name="Ohmori Y."/>
            <person name="Kawabata A."/>
            <person name="Hikiji T."/>
            <person name="Kobatake N."/>
            <person name="Inagaki H."/>
            <person name="Ikema Y."/>
            <person name="Okamoto S."/>
            <person name="Okitani R."/>
            <person name="Kawakami T."/>
            <person name="Noguchi S."/>
            <person name="Itoh T."/>
            <person name="Shigeta K."/>
            <person name="Senba T."/>
            <person name="Matsumura K."/>
            <person name="Nakajima Y."/>
            <person name="Mizuno T."/>
            <person name="Morinaga M."/>
            <person name="Sasaki M."/>
            <person name="Togashi T."/>
            <person name="Oyama M."/>
            <person name="Hata H."/>
            <person name="Watanabe M."/>
            <person name="Komatsu T."/>
            <person name="Mizushima-Sugano J."/>
            <person name="Satoh T."/>
            <person name="Shirai Y."/>
            <person name="Takahashi Y."/>
            <person name="Nakagawa K."/>
            <person name="Okumura K."/>
            <person name="Nagase T."/>
            <person name="Nomura N."/>
            <person name="Kikuchi H."/>
            <person name="Masuho Y."/>
            <person name="Yamashita R."/>
            <person name="Nakai K."/>
            <person name="Yada T."/>
            <person name="Nakamura Y."/>
            <person name="Ohara O."/>
            <person name="Isogai T."/>
            <person name="Sugano S."/>
        </authorList>
    </citation>
    <scope>NUCLEOTIDE SEQUENCE [LARGE SCALE MRNA]</scope>
    <source>
        <tissue>Mammary gland</tissue>
    </source>
</reference>
<reference key="3">
    <citation type="journal article" date="2006" name="Nature">
        <title>DNA sequence of human chromosome 17 and analysis of rearrangement in the human lineage.</title>
        <authorList>
            <person name="Zody M.C."/>
            <person name="Garber M."/>
            <person name="Adams D.J."/>
            <person name="Sharpe T."/>
            <person name="Harrow J."/>
            <person name="Lupski J.R."/>
            <person name="Nicholson C."/>
            <person name="Searle S.M."/>
            <person name="Wilming L."/>
            <person name="Young S.K."/>
            <person name="Abouelleil A."/>
            <person name="Allen N.R."/>
            <person name="Bi W."/>
            <person name="Bloom T."/>
            <person name="Borowsky M.L."/>
            <person name="Bugalter B.E."/>
            <person name="Butler J."/>
            <person name="Chang J.L."/>
            <person name="Chen C.-K."/>
            <person name="Cook A."/>
            <person name="Corum B."/>
            <person name="Cuomo C.A."/>
            <person name="de Jong P.J."/>
            <person name="DeCaprio D."/>
            <person name="Dewar K."/>
            <person name="FitzGerald M."/>
            <person name="Gilbert J."/>
            <person name="Gibson R."/>
            <person name="Gnerre S."/>
            <person name="Goldstein S."/>
            <person name="Grafham D.V."/>
            <person name="Grocock R."/>
            <person name="Hafez N."/>
            <person name="Hagopian D.S."/>
            <person name="Hart E."/>
            <person name="Norman C.H."/>
            <person name="Humphray S."/>
            <person name="Jaffe D.B."/>
            <person name="Jones M."/>
            <person name="Kamal M."/>
            <person name="Khodiyar V.K."/>
            <person name="LaButti K."/>
            <person name="Laird G."/>
            <person name="Lehoczky J."/>
            <person name="Liu X."/>
            <person name="Lokyitsang T."/>
            <person name="Loveland J."/>
            <person name="Lui A."/>
            <person name="Macdonald P."/>
            <person name="Major J.E."/>
            <person name="Matthews L."/>
            <person name="Mauceli E."/>
            <person name="McCarroll S.A."/>
            <person name="Mihalev A.H."/>
            <person name="Mudge J."/>
            <person name="Nguyen C."/>
            <person name="Nicol R."/>
            <person name="O'Leary S.B."/>
            <person name="Osoegawa K."/>
            <person name="Schwartz D.C."/>
            <person name="Shaw-Smith C."/>
            <person name="Stankiewicz P."/>
            <person name="Steward C."/>
            <person name="Swarbreck D."/>
            <person name="Venkataraman V."/>
            <person name="Whittaker C.A."/>
            <person name="Yang X."/>
            <person name="Zimmer A.R."/>
            <person name="Bradley A."/>
            <person name="Hubbard T."/>
            <person name="Birren B.W."/>
            <person name="Rogers J."/>
            <person name="Lander E.S."/>
            <person name="Nusbaum C."/>
        </authorList>
    </citation>
    <scope>NUCLEOTIDE SEQUENCE [LARGE SCALE GENOMIC DNA]</scope>
</reference>
<reference key="4">
    <citation type="journal article" date="2004" name="Genome Res.">
        <title>The status, quality, and expansion of the NIH full-length cDNA project: the Mammalian Gene Collection (MGC).</title>
        <authorList>
            <consortium name="The MGC Project Team"/>
        </authorList>
    </citation>
    <scope>NUCLEOTIDE SEQUENCE [LARGE SCALE MRNA]</scope>
    <source>
        <tissue>Brain</tissue>
        <tissue>Lung</tissue>
    </source>
</reference>
<reference key="5">
    <citation type="journal article" date="2024" name="Science">
        <title>Transition of human gamma-tubulin ring complex into a closed conformation during microtubule nucleation.</title>
        <authorList>
            <person name="Brito C."/>
            <person name="Serna M."/>
            <person name="Guerra P."/>
            <person name="Llorca O."/>
            <person name="Surrey T."/>
        </authorList>
    </citation>
    <scope>FUNCTION</scope>
    <scope>SUBUNIT</scope>
    <scope>INTERACTION WITH TUBA1B AND TUBB3</scope>
</reference>
<sequence>MPREIITLQLGQCGNQIGFEFWKQLCAEHGISPEGIVEEFATEGTDRKDVFFYQADDEHYIPRAVLLDLEPRVIHSILNSPYAKLYNPENIYLSEHGGGAGNNWASGFSQGEKIHEDIFDIIDREADGSDSLEGFVLCHSIAGGTGSGLGSYLLERLNDRYPKKLVQTYSVFPYQDEMSDVVVQPYNSLLTLKRLTQNADCVVVLDNTALNRIATDRLHIQNPSFSQINQLVSTIMSASTTTLRYPGYMNNDLIGLIASLIPTPRLHFLMTGYTPLTTDQSVASVRKTTVLDVMRRLLQPKNVMVSTGRDRQTNHCYIAILNIIQGEVDPTQVHKSLQRIRERKLANFIPWGPASIQVALSRKSPYLPSAHRVSGLMMANHTSISSLFESSCQQFDKLRKRDAFLEQFRKEDMFKDNFDEMDRSREVVQELIDEYHAATQPDYISWGTQEQ</sequence>
<evidence type="ECO:0000250" key="1">
    <source>
        <dbReference type="UniProtKB" id="Q8VCK3"/>
    </source>
</evidence>
<evidence type="ECO:0000255" key="2"/>
<evidence type="ECO:0000269" key="3">
    <source>
    </source>
</evidence>
<evidence type="ECO:0000305" key="4"/>
<dbReference type="EMBL" id="AF225971">
    <property type="protein sequence ID" value="AAF34188.1"/>
    <property type="molecule type" value="mRNA"/>
</dbReference>
<dbReference type="EMBL" id="AK022324">
    <property type="protein sequence ID" value="BAB14012.1"/>
    <property type="molecule type" value="mRNA"/>
</dbReference>
<dbReference type="EMBL" id="AC067852">
    <property type="status" value="NOT_ANNOTATED_CDS"/>
    <property type="molecule type" value="Genomic_DNA"/>
</dbReference>
<dbReference type="EMBL" id="BC009670">
    <property type="protein sequence ID" value="AAH09670.1"/>
    <property type="molecule type" value="mRNA"/>
</dbReference>
<dbReference type="EMBL" id="BC051890">
    <property type="protein sequence ID" value="AAH51890.1"/>
    <property type="molecule type" value="mRNA"/>
</dbReference>
<dbReference type="EMBL" id="BC108739">
    <property type="protein sequence ID" value="AAI08740.1"/>
    <property type="molecule type" value="mRNA"/>
</dbReference>
<dbReference type="CCDS" id="CCDS32658.1"/>
<dbReference type="RefSeq" id="NP_057521.1">
    <property type="nucleotide sequence ID" value="NM_016437.3"/>
</dbReference>
<dbReference type="SMR" id="Q9NRH3"/>
<dbReference type="BioGRID" id="118052">
    <property type="interactions" value="41"/>
</dbReference>
<dbReference type="FunCoup" id="Q9NRH3">
    <property type="interactions" value="1392"/>
</dbReference>
<dbReference type="IntAct" id="Q9NRH3">
    <property type="interactions" value="33"/>
</dbReference>
<dbReference type="MINT" id="Q9NRH3"/>
<dbReference type="STRING" id="9606.ENSP00000251412"/>
<dbReference type="GlyGen" id="Q9NRH3">
    <property type="glycosylation" value="1 site, 1 O-linked glycan (1 site)"/>
</dbReference>
<dbReference type="iPTMnet" id="Q9NRH3"/>
<dbReference type="MetOSite" id="Q9NRH3"/>
<dbReference type="PhosphoSitePlus" id="Q9NRH3"/>
<dbReference type="BioMuta" id="TUBG2"/>
<dbReference type="DMDM" id="12585375"/>
<dbReference type="jPOST" id="Q9NRH3"/>
<dbReference type="MassIVE" id="Q9NRH3"/>
<dbReference type="PaxDb" id="9606-ENSP00000251412"/>
<dbReference type="PeptideAtlas" id="Q9NRH3"/>
<dbReference type="ProteomicsDB" id="82364"/>
<dbReference type="Pumba" id="Q9NRH3"/>
<dbReference type="Antibodypedia" id="29321">
    <property type="antibodies" value="75 antibodies from 22 providers"/>
</dbReference>
<dbReference type="DNASU" id="27175"/>
<dbReference type="Ensembl" id="ENST00000251412.8">
    <property type="protein sequence ID" value="ENSP00000251412.6"/>
    <property type="gene ID" value="ENSG00000037042.9"/>
</dbReference>
<dbReference type="GeneID" id="27175"/>
<dbReference type="KEGG" id="hsa:27175"/>
<dbReference type="MANE-Select" id="ENST00000251412.8">
    <property type="protein sequence ID" value="ENSP00000251412.6"/>
    <property type="RefSeq nucleotide sequence ID" value="NM_016437.3"/>
    <property type="RefSeq protein sequence ID" value="NP_057521.1"/>
</dbReference>
<dbReference type="UCSC" id="uc010wgr.3">
    <property type="organism name" value="human"/>
</dbReference>
<dbReference type="AGR" id="HGNC:12419"/>
<dbReference type="CTD" id="27175"/>
<dbReference type="DisGeNET" id="27175"/>
<dbReference type="GeneCards" id="TUBG2"/>
<dbReference type="HGNC" id="HGNC:12419">
    <property type="gene designation" value="TUBG2"/>
</dbReference>
<dbReference type="HPA" id="ENSG00000037042">
    <property type="expression patterns" value="Tissue enhanced (brain)"/>
</dbReference>
<dbReference type="MIM" id="605785">
    <property type="type" value="gene"/>
</dbReference>
<dbReference type="neXtProt" id="NX_Q9NRH3"/>
<dbReference type="OpenTargets" id="ENSG00000037042"/>
<dbReference type="PharmGKB" id="PA37081"/>
<dbReference type="VEuPathDB" id="HostDB:ENSG00000037042"/>
<dbReference type="eggNOG" id="KOG1374">
    <property type="taxonomic scope" value="Eukaryota"/>
</dbReference>
<dbReference type="GeneTree" id="ENSGT00940000162499"/>
<dbReference type="HOGENOM" id="CLU_015718_1_0_1"/>
<dbReference type="InParanoid" id="Q9NRH3"/>
<dbReference type="OMA" id="QTYSIFP"/>
<dbReference type="OrthoDB" id="10249382at2759"/>
<dbReference type="PAN-GO" id="Q9NRH3">
    <property type="GO annotations" value="13 GO annotations based on evolutionary models"/>
</dbReference>
<dbReference type="PhylomeDB" id="Q9NRH3"/>
<dbReference type="TreeFam" id="TF300477"/>
<dbReference type="PathwayCommons" id="Q9NRH3"/>
<dbReference type="Reactome" id="R-HSA-380270">
    <property type="pathway name" value="Recruitment of mitotic centrosome proteins and complexes"/>
</dbReference>
<dbReference type="Reactome" id="R-HSA-380320">
    <property type="pathway name" value="Recruitment of NuMA to mitotic centrosomes"/>
</dbReference>
<dbReference type="SignaLink" id="Q9NRH3"/>
<dbReference type="BioGRID-ORCS" id="27175">
    <property type="hits" value="185 hits in 1154 CRISPR screens"/>
</dbReference>
<dbReference type="CD-CODE" id="91857CE7">
    <property type="entry name" value="Nucleolus"/>
</dbReference>
<dbReference type="CD-CODE" id="FB4E32DD">
    <property type="entry name" value="Presynaptic clusters and postsynaptic densities"/>
</dbReference>
<dbReference type="ChiTaRS" id="TUBG2">
    <property type="organism name" value="human"/>
</dbReference>
<dbReference type="GeneWiki" id="TUBG2"/>
<dbReference type="GenomeRNAi" id="27175"/>
<dbReference type="Pharos" id="Q9NRH3">
    <property type="development level" value="Tbio"/>
</dbReference>
<dbReference type="PRO" id="PR:Q9NRH3"/>
<dbReference type="Proteomes" id="UP000005640">
    <property type="component" value="Chromosome 17"/>
</dbReference>
<dbReference type="RNAct" id="Q9NRH3">
    <property type="molecule type" value="protein"/>
</dbReference>
<dbReference type="Bgee" id="ENSG00000037042">
    <property type="expression patterns" value="Expressed in right frontal lobe and 171 other cell types or tissues"/>
</dbReference>
<dbReference type="GO" id="GO:0005813">
    <property type="term" value="C:centrosome"/>
    <property type="evidence" value="ECO:0000318"/>
    <property type="project" value="GO_Central"/>
</dbReference>
<dbReference type="GO" id="GO:0005737">
    <property type="term" value="C:cytoplasm"/>
    <property type="evidence" value="ECO:0000318"/>
    <property type="project" value="GO_Central"/>
</dbReference>
<dbReference type="GO" id="GO:0005881">
    <property type="term" value="C:cytoplasmic microtubule"/>
    <property type="evidence" value="ECO:0007669"/>
    <property type="project" value="Ensembl"/>
</dbReference>
<dbReference type="GO" id="GO:0005829">
    <property type="term" value="C:cytosol"/>
    <property type="evidence" value="ECO:0000304"/>
    <property type="project" value="Reactome"/>
</dbReference>
<dbReference type="GO" id="GO:0000931">
    <property type="term" value="C:gamma-tubulin ring complex"/>
    <property type="evidence" value="ECO:0000318"/>
    <property type="project" value="GO_Central"/>
</dbReference>
<dbReference type="GO" id="GO:0005874">
    <property type="term" value="C:microtubule"/>
    <property type="evidence" value="ECO:0000314"/>
    <property type="project" value="UniProtKB"/>
</dbReference>
<dbReference type="GO" id="GO:0015630">
    <property type="term" value="C:microtubule cytoskeleton"/>
    <property type="evidence" value="ECO:0000304"/>
    <property type="project" value="ProtInc"/>
</dbReference>
<dbReference type="GO" id="GO:0005634">
    <property type="term" value="C:nucleus"/>
    <property type="evidence" value="ECO:0000318"/>
    <property type="project" value="GO_Central"/>
</dbReference>
<dbReference type="GO" id="GO:0000242">
    <property type="term" value="C:pericentriolar material"/>
    <property type="evidence" value="ECO:0007669"/>
    <property type="project" value="Ensembl"/>
</dbReference>
<dbReference type="GO" id="GO:0005819">
    <property type="term" value="C:spindle"/>
    <property type="evidence" value="ECO:0000318"/>
    <property type="project" value="GO_Central"/>
</dbReference>
<dbReference type="GO" id="GO:0005876">
    <property type="term" value="C:spindle microtubule"/>
    <property type="evidence" value="ECO:0007669"/>
    <property type="project" value="Ensembl"/>
</dbReference>
<dbReference type="GO" id="GO:0005525">
    <property type="term" value="F:GTP binding"/>
    <property type="evidence" value="ECO:0000318"/>
    <property type="project" value="GO_Central"/>
</dbReference>
<dbReference type="GO" id="GO:0140490">
    <property type="term" value="F:microtubule nucleator activity"/>
    <property type="evidence" value="ECO:0000318"/>
    <property type="project" value="GO_Central"/>
</dbReference>
<dbReference type="GO" id="GO:0005198">
    <property type="term" value="F:structural molecule activity"/>
    <property type="evidence" value="ECO:0000304"/>
    <property type="project" value="ProtInc"/>
</dbReference>
<dbReference type="GO" id="GO:0031122">
    <property type="term" value="P:cytoplasmic microtubule organization"/>
    <property type="evidence" value="ECO:0007669"/>
    <property type="project" value="InterPro"/>
</dbReference>
<dbReference type="GO" id="GO:0000212">
    <property type="term" value="P:meiotic spindle organization"/>
    <property type="evidence" value="ECO:0000318"/>
    <property type="project" value="GO_Central"/>
</dbReference>
<dbReference type="GO" id="GO:0007020">
    <property type="term" value="P:microtubule nucleation"/>
    <property type="evidence" value="ECO:0000318"/>
    <property type="project" value="GO_Central"/>
</dbReference>
<dbReference type="GO" id="GO:0000278">
    <property type="term" value="P:mitotic cell cycle"/>
    <property type="evidence" value="ECO:0000318"/>
    <property type="project" value="GO_Central"/>
</dbReference>
<dbReference type="GO" id="GO:0000070">
    <property type="term" value="P:mitotic sister chromatid segregation"/>
    <property type="evidence" value="ECO:0000318"/>
    <property type="project" value="GO_Central"/>
</dbReference>
<dbReference type="GO" id="GO:0007052">
    <property type="term" value="P:mitotic spindle organization"/>
    <property type="evidence" value="ECO:0000318"/>
    <property type="project" value="GO_Central"/>
</dbReference>
<dbReference type="CDD" id="cd02188">
    <property type="entry name" value="gamma_tubulin"/>
    <property type="match status" value="1"/>
</dbReference>
<dbReference type="FunFam" id="1.10.287.600:FF:000004">
    <property type="entry name" value="Tubulin gamma chain"/>
    <property type="match status" value="1"/>
</dbReference>
<dbReference type="FunFam" id="3.30.1330.20:FF:000003">
    <property type="entry name" value="Tubulin gamma chain"/>
    <property type="match status" value="1"/>
</dbReference>
<dbReference type="FunFam" id="3.40.50.1440:FF:000010">
    <property type="entry name" value="Tubulin gamma chain"/>
    <property type="match status" value="1"/>
</dbReference>
<dbReference type="Gene3D" id="1.10.287.600">
    <property type="entry name" value="Helix hairpin bin"/>
    <property type="match status" value="1"/>
</dbReference>
<dbReference type="Gene3D" id="3.30.1330.20">
    <property type="entry name" value="Tubulin/FtsZ, C-terminal domain"/>
    <property type="match status" value="1"/>
</dbReference>
<dbReference type="Gene3D" id="3.40.50.1440">
    <property type="entry name" value="Tubulin/FtsZ, GTPase domain"/>
    <property type="match status" value="1"/>
</dbReference>
<dbReference type="InterPro" id="IPR002454">
    <property type="entry name" value="Gamma_tubulin"/>
</dbReference>
<dbReference type="InterPro" id="IPR008280">
    <property type="entry name" value="Tub_FtsZ_C"/>
</dbReference>
<dbReference type="InterPro" id="IPR000217">
    <property type="entry name" value="Tubulin"/>
</dbReference>
<dbReference type="InterPro" id="IPR037103">
    <property type="entry name" value="Tubulin/FtsZ-like_C"/>
</dbReference>
<dbReference type="InterPro" id="IPR018316">
    <property type="entry name" value="Tubulin/FtsZ_2-layer-sand-dom"/>
</dbReference>
<dbReference type="InterPro" id="IPR036525">
    <property type="entry name" value="Tubulin/FtsZ_GTPase_sf"/>
</dbReference>
<dbReference type="InterPro" id="IPR023123">
    <property type="entry name" value="Tubulin_C"/>
</dbReference>
<dbReference type="InterPro" id="IPR017975">
    <property type="entry name" value="Tubulin_CS"/>
</dbReference>
<dbReference type="InterPro" id="IPR003008">
    <property type="entry name" value="Tubulin_FtsZ_GTPase"/>
</dbReference>
<dbReference type="PANTHER" id="PTHR11588">
    <property type="entry name" value="TUBULIN"/>
    <property type="match status" value="1"/>
</dbReference>
<dbReference type="Pfam" id="PF00091">
    <property type="entry name" value="Tubulin"/>
    <property type="match status" value="1"/>
</dbReference>
<dbReference type="Pfam" id="PF03953">
    <property type="entry name" value="Tubulin_C"/>
    <property type="match status" value="1"/>
</dbReference>
<dbReference type="PRINTS" id="PR01164">
    <property type="entry name" value="GAMMATUBULIN"/>
</dbReference>
<dbReference type="PRINTS" id="PR01161">
    <property type="entry name" value="TUBULIN"/>
</dbReference>
<dbReference type="SMART" id="SM00864">
    <property type="entry name" value="Tubulin"/>
    <property type="match status" value="1"/>
</dbReference>
<dbReference type="SMART" id="SM00865">
    <property type="entry name" value="Tubulin_C"/>
    <property type="match status" value="1"/>
</dbReference>
<dbReference type="SUPFAM" id="SSF55307">
    <property type="entry name" value="Tubulin C-terminal domain-like"/>
    <property type="match status" value="1"/>
</dbReference>
<dbReference type="SUPFAM" id="SSF52490">
    <property type="entry name" value="Tubulin nucleotide-binding domain-like"/>
    <property type="match status" value="1"/>
</dbReference>
<dbReference type="PROSITE" id="PS00227">
    <property type="entry name" value="TUBULIN"/>
    <property type="match status" value="1"/>
</dbReference>